<organism>
    <name type="scientific">Glycine max</name>
    <name type="common">Soybean</name>
    <name type="synonym">Glycine hispida</name>
    <dbReference type="NCBI Taxonomy" id="3847"/>
    <lineage>
        <taxon>Eukaryota</taxon>
        <taxon>Viridiplantae</taxon>
        <taxon>Streptophyta</taxon>
        <taxon>Embryophyta</taxon>
        <taxon>Tracheophyta</taxon>
        <taxon>Spermatophyta</taxon>
        <taxon>Magnoliopsida</taxon>
        <taxon>eudicotyledons</taxon>
        <taxon>Gunneridae</taxon>
        <taxon>Pentapetalae</taxon>
        <taxon>rosids</taxon>
        <taxon>fabids</taxon>
        <taxon>Fabales</taxon>
        <taxon>Fabaceae</taxon>
        <taxon>Papilionoideae</taxon>
        <taxon>50 kb inversion clade</taxon>
        <taxon>NPAAA clade</taxon>
        <taxon>indigoferoid/millettioid clade</taxon>
        <taxon>Phaseoleae</taxon>
        <taxon>Glycine</taxon>
        <taxon>Glycine subgen. Soja</taxon>
    </lineage>
</organism>
<keyword id="KW-1003">Cell membrane</keyword>
<keyword id="KW-0325">Glycoprotein</keyword>
<keyword id="KW-0472">Membrane</keyword>
<keyword id="KW-1185">Reference proteome</keyword>
<keyword id="KW-0812">Transmembrane</keyword>
<keyword id="KW-1133">Transmembrane helix</keyword>
<proteinExistence type="evidence at transcript level"/>
<accession>C6T2J5</accession>
<sequence length="185" mass="20555">MRTHIDDSASGKNHHLPMLWFFDSSLRLCAIPLSVATMWITVTNKEDNSSYGMLKYNNLSALKYMVLVSALCACYALLAAACSLVRCFVSKAWIFFVSDQIVAYLAITSVAAVMEMYYLAYNGAKEDSWSEACSSYGSFCSKVKLALILHTITFCCFFVIAVISAFRAFSVFDPPFVNSQEVQGD</sequence>
<comment type="subunit">
    <text evidence="1">Homodimer and heterodimers.</text>
</comment>
<comment type="subcellular location">
    <subcellularLocation>
        <location evidence="1">Cell membrane</location>
        <topology evidence="1">Multi-pass membrane protein</topology>
    </subcellularLocation>
</comment>
<comment type="similarity">
    <text evidence="3">Belongs to the Casparian strip membrane proteins (CASP) family.</text>
</comment>
<dbReference type="EMBL" id="BT091654">
    <property type="protein sequence ID" value="ACU15861.1"/>
    <property type="molecule type" value="mRNA"/>
</dbReference>
<dbReference type="RefSeq" id="NP_001235047.1">
    <property type="nucleotide sequence ID" value="NM_001248118.2"/>
</dbReference>
<dbReference type="SMR" id="C6T2J5"/>
<dbReference type="FunCoup" id="C6T2J5">
    <property type="interactions" value="1418"/>
</dbReference>
<dbReference type="STRING" id="3847.C6T2J5"/>
<dbReference type="PaxDb" id="3847-GLYMA01G16360.1"/>
<dbReference type="EnsemblPlants" id="KRH75303">
    <property type="protein sequence ID" value="KRH75303"/>
    <property type="gene ID" value="GLYMA_01G077100"/>
</dbReference>
<dbReference type="GeneID" id="100526854"/>
<dbReference type="Gramene" id="KRH75303">
    <property type="protein sequence ID" value="KRH75303"/>
    <property type="gene ID" value="GLYMA_01G077100"/>
</dbReference>
<dbReference type="KEGG" id="gmx:100526854"/>
<dbReference type="eggNOG" id="ENOG502RY7Y">
    <property type="taxonomic scope" value="Eukaryota"/>
</dbReference>
<dbReference type="HOGENOM" id="CLU_066104_2_2_1"/>
<dbReference type="InParanoid" id="C6T2J5"/>
<dbReference type="OMA" id="CINAICA"/>
<dbReference type="OrthoDB" id="755577at2759"/>
<dbReference type="Proteomes" id="UP000008827">
    <property type="component" value="Chromosome 1"/>
</dbReference>
<dbReference type="GO" id="GO:0005886">
    <property type="term" value="C:plasma membrane"/>
    <property type="evidence" value="ECO:0007669"/>
    <property type="project" value="UniProtKB-SubCell"/>
</dbReference>
<dbReference type="InterPro" id="IPR006459">
    <property type="entry name" value="CASP/CASPL"/>
</dbReference>
<dbReference type="InterPro" id="IPR006702">
    <property type="entry name" value="CASP_dom"/>
</dbReference>
<dbReference type="NCBIfam" id="TIGR01569">
    <property type="entry name" value="A_tha_TIGR01569"/>
    <property type="match status" value="1"/>
</dbReference>
<dbReference type="PANTHER" id="PTHR33573:SF30">
    <property type="entry name" value="CASP-LIKE PROTEIN 2C1-RELATED"/>
    <property type="match status" value="1"/>
</dbReference>
<dbReference type="PANTHER" id="PTHR33573">
    <property type="entry name" value="CASP-LIKE PROTEIN 4A4"/>
    <property type="match status" value="1"/>
</dbReference>
<dbReference type="Pfam" id="PF04535">
    <property type="entry name" value="CASP_dom"/>
    <property type="match status" value="1"/>
</dbReference>
<name>CSPL4_SOYBN</name>
<feature type="chain" id="PRO_0000391543" description="CASP-like protein 2D1">
    <location>
        <begin position="1"/>
        <end position="185"/>
    </location>
</feature>
<feature type="topological domain" description="Cytoplasmic" evidence="2">
    <location>
        <begin position="1"/>
        <end position="15"/>
    </location>
</feature>
<feature type="transmembrane region" description="Helical" evidence="2">
    <location>
        <begin position="16"/>
        <end position="36"/>
    </location>
</feature>
<feature type="topological domain" description="Extracellular" evidence="2">
    <location>
        <begin position="37"/>
        <end position="64"/>
    </location>
</feature>
<feature type="transmembrane region" description="Helical" evidence="2">
    <location>
        <begin position="65"/>
        <end position="85"/>
    </location>
</feature>
<feature type="topological domain" description="Cytoplasmic" evidence="2">
    <location>
        <begin position="86"/>
        <end position="92"/>
    </location>
</feature>
<feature type="transmembrane region" description="Helical" evidence="2">
    <location>
        <begin position="93"/>
        <end position="113"/>
    </location>
</feature>
<feature type="topological domain" description="Extracellular" evidence="2">
    <location>
        <begin position="114"/>
        <end position="145"/>
    </location>
</feature>
<feature type="transmembrane region" description="Helical" evidence="2">
    <location>
        <begin position="146"/>
        <end position="166"/>
    </location>
</feature>
<feature type="topological domain" description="Cytoplasmic" evidence="2">
    <location>
        <begin position="167"/>
        <end position="185"/>
    </location>
</feature>
<feature type="glycosylation site" description="N-linked (GlcNAc...) asparagine" evidence="2">
    <location>
        <position position="48"/>
    </location>
</feature>
<feature type="glycosylation site" description="N-linked (GlcNAc...) asparagine" evidence="2">
    <location>
        <position position="58"/>
    </location>
</feature>
<reference key="1">
    <citation type="submission" date="2009-08" db="EMBL/GenBank/DDBJ databases">
        <authorList>
            <person name="Cheung F."/>
            <person name="Xiao Y."/>
            <person name="Chan A."/>
            <person name="Moskal W."/>
            <person name="Town C.D."/>
        </authorList>
    </citation>
    <scope>NUCLEOTIDE SEQUENCE [LARGE SCALE MRNA]</scope>
</reference>
<reference key="2">
    <citation type="journal article" date="2014" name="Plant Physiol.">
        <title>Functional and evolutionary analysis of the CASPARIAN STRIP MEMBRANE DOMAIN PROTEIN family.</title>
        <authorList>
            <person name="Roppolo D."/>
            <person name="Boeckmann B."/>
            <person name="Pfister A."/>
            <person name="Boutet E."/>
            <person name="Rubio M.C."/>
            <person name="Denervaud-Tendon V."/>
            <person name="Vermeer J.E."/>
            <person name="Gheyselinck J."/>
            <person name="Xenarios I."/>
            <person name="Geldner N."/>
        </authorList>
    </citation>
    <scope>GENE FAMILY</scope>
    <scope>NOMENCLATURE</scope>
</reference>
<evidence type="ECO:0000250" key="1"/>
<evidence type="ECO:0000255" key="2"/>
<evidence type="ECO:0000305" key="3"/>
<protein>
    <recommendedName>
        <fullName>CASP-like protein 2D1</fullName>
        <shortName>GmCASPL2D1</shortName>
    </recommendedName>
</protein>